<protein>
    <recommendedName>
        <fullName>Probable quinol oxidase subunit 1</fullName>
        <ecNumber>1.10.3.-</ecNumber>
    </recommendedName>
    <alternativeName>
        <fullName>Quinol oxidase polypeptide I</fullName>
    </alternativeName>
</protein>
<proteinExistence type="inferred from homology"/>
<comment type="function">
    <text evidence="1">Catalyzes quinol oxidation with the concomitant reduction of oxygen to water.</text>
</comment>
<comment type="catalytic activity">
    <reaction>
        <text>2 a quinol + O2 = 2 a quinone + 2 H2O</text>
        <dbReference type="Rhea" id="RHEA:55376"/>
        <dbReference type="ChEBI" id="CHEBI:15377"/>
        <dbReference type="ChEBI" id="CHEBI:15379"/>
        <dbReference type="ChEBI" id="CHEBI:24646"/>
        <dbReference type="ChEBI" id="CHEBI:132124"/>
    </reaction>
</comment>
<comment type="cofactor">
    <cofactor evidence="1">
        <name>Cu cation</name>
        <dbReference type="ChEBI" id="CHEBI:23378"/>
    </cofactor>
    <text evidence="1">Binds a copper B center.</text>
</comment>
<comment type="cofactor">
    <cofactor evidence="1">
        <name>ferriheme a</name>
        <dbReference type="ChEBI" id="CHEBI:60532"/>
    </cofactor>
</comment>
<comment type="cofactor">
    <text evidence="1">Heme A3.</text>
</comment>
<comment type="pathway">
    <text>Energy metabolism; oxidative phosphorylation.</text>
</comment>
<comment type="subcellular location">
    <subcellularLocation>
        <location evidence="1">Cell membrane</location>
        <topology evidence="1">Multi-pass membrane protein</topology>
    </subcellularLocation>
</comment>
<comment type="similarity">
    <text evidence="3">Belongs to the heme-copper respiratory oxidase family.</text>
</comment>
<dbReference type="EC" id="1.10.3.-"/>
<dbReference type="EMBL" id="CP000029">
    <property type="protein sequence ID" value="AAW53983.1"/>
    <property type="molecule type" value="Genomic_DNA"/>
</dbReference>
<dbReference type="RefSeq" id="WP_001831713.1">
    <property type="nucleotide sequence ID" value="NC_002976.3"/>
</dbReference>
<dbReference type="SMR" id="Q5HQB0"/>
<dbReference type="STRING" id="176279.SERP0645"/>
<dbReference type="GeneID" id="50019102"/>
<dbReference type="KEGG" id="ser:SERP0645"/>
<dbReference type="eggNOG" id="COG0843">
    <property type="taxonomic scope" value="Bacteria"/>
</dbReference>
<dbReference type="HOGENOM" id="CLU_011899_7_1_9"/>
<dbReference type="UniPathway" id="UPA00705"/>
<dbReference type="Proteomes" id="UP000000531">
    <property type="component" value="Chromosome"/>
</dbReference>
<dbReference type="GO" id="GO:0005886">
    <property type="term" value="C:plasma membrane"/>
    <property type="evidence" value="ECO:0007669"/>
    <property type="project" value="UniProtKB-SubCell"/>
</dbReference>
<dbReference type="GO" id="GO:0005507">
    <property type="term" value="F:copper ion binding"/>
    <property type="evidence" value="ECO:0007669"/>
    <property type="project" value="InterPro"/>
</dbReference>
<dbReference type="GO" id="GO:0004129">
    <property type="term" value="F:cytochrome-c oxidase activity"/>
    <property type="evidence" value="ECO:0007669"/>
    <property type="project" value="InterPro"/>
</dbReference>
<dbReference type="GO" id="GO:0020037">
    <property type="term" value="F:heme binding"/>
    <property type="evidence" value="ECO:0007669"/>
    <property type="project" value="InterPro"/>
</dbReference>
<dbReference type="GO" id="GO:0016682">
    <property type="term" value="F:oxidoreductase activity, acting on diphenols and related substances as donors, oxygen as acceptor"/>
    <property type="evidence" value="ECO:0007669"/>
    <property type="project" value="InterPro"/>
</dbReference>
<dbReference type="GO" id="GO:0015990">
    <property type="term" value="P:electron transport coupled proton transport"/>
    <property type="evidence" value="ECO:0007669"/>
    <property type="project" value="TreeGrafter"/>
</dbReference>
<dbReference type="GO" id="GO:0006119">
    <property type="term" value="P:oxidative phosphorylation"/>
    <property type="evidence" value="ECO:0007669"/>
    <property type="project" value="UniProtKB-UniPathway"/>
</dbReference>
<dbReference type="GO" id="GO:0022904">
    <property type="term" value="P:respiratory electron transport chain"/>
    <property type="evidence" value="ECO:0007669"/>
    <property type="project" value="TreeGrafter"/>
</dbReference>
<dbReference type="CDD" id="cd01662">
    <property type="entry name" value="Ubiquinol_Oxidase_I"/>
    <property type="match status" value="1"/>
</dbReference>
<dbReference type="FunFam" id="1.20.210.10:FF:000002">
    <property type="entry name" value="Cytochrome o ubiquinol oxidase, subunit I"/>
    <property type="match status" value="1"/>
</dbReference>
<dbReference type="Gene3D" id="1.20.210.10">
    <property type="entry name" value="Cytochrome c oxidase-like, subunit I domain"/>
    <property type="match status" value="1"/>
</dbReference>
<dbReference type="InterPro" id="IPR023616">
    <property type="entry name" value="Cyt_c_oxase-like_su1_dom"/>
</dbReference>
<dbReference type="InterPro" id="IPR036927">
    <property type="entry name" value="Cyt_c_oxase-like_su1_sf"/>
</dbReference>
<dbReference type="InterPro" id="IPR000883">
    <property type="entry name" value="Cyt_C_Oxase_1"/>
</dbReference>
<dbReference type="InterPro" id="IPR023615">
    <property type="entry name" value="Cyt_c_Oxase_su1_BS"/>
</dbReference>
<dbReference type="InterPro" id="IPR014233">
    <property type="entry name" value="QoxB"/>
</dbReference>
<dbReference type="NCBIfam" id="TIGR02882">
    <property type="entry name" value="QoxB"/>
    <property type="match status" value="1"/>
</dbReference>
<dbReference type="PANTHER" id="PTHR10422:SF35">
    <property type="entry name" value="CYTOCHROME BO(3) UBIQUINOL OXIDASE SUBUNIT 1"/>
    <property type="match status" value="1"/>
</dbReference>
<dbReference type="PANTHER" id="PTHR10422">
    <property type="entry name" value="CYTOCHROME C OXIDASE SUBUNIT 1"/>
    <property type="match status" value="1"/>
</dbReference>
<dbReference type="Pfam" id="PF00115">
    <property type="entry name" value="COX1"/>
    <property type="match status" value="1"/>
</dbReference>
<dbReference type="PRINTS" id="PR01165">
    <property type="entry name" value="CYCOXIDASEI"/>
</dbReference>
<dbReference type="SUPFAM" id="SSF81442">
    <property type="entry name" value="Cytochrome c oxidase subunit I-like"/>
    <property type="match status" value="1"/>
</dbReference>
<dbReference type="PROSITE" id="PS50855">
    <property type="entry name" value="COX1"/>
    <property type="match status" value="1"/>
</dbReference>
<dbReference type="PROSITE" id="PS00077">
    <property type="entry name" value="COX1_CUB"/>
    <property type="match status" value="1"/>
</dbReference>
<sequence length="662" mass="75267">MNFPWDQLLVKGNWMIISAQIAAPFLVIGLIAVISYFKLWKYLYKEWFTSVDHKKIGIMYLISAVLMFVRGGIDALMLRTQLTIPDNKFLEANHYNEVFTTHGVIMIIFMAMPFIFGLWNVVIPLQLGARDVAFPVMNNVSFWLFFAGMILFNLSFIVGGSPAAGWTNYAPLAGEFSPGPGVNYYLIAIQISGIGSLMTGINFFVTILRCKTPTMKFMQMPMFSVTTFITTLIVILAFPVFTVALALMTADRIFGTQFFTVANGGMPMLWANFFWVWGHPEVYIVILPAFGMYSEIIPTFARKRLFGHQSMIWATAGIAFLSFLVWVHHFFTMGNGALINSFFSISTMLIGVPTGVKLFNWLLTLYKGRITFESPMLFSLAFIPNFLLGGVTGVMLAMASADYQYHNTYFLVAHFHYTLVTGVVFACLAGLIFWYPKMMGYKLNETLNKWCFWFFMIGFNVCFLPQFILGLDGMPRRLYTYMPSDGWWLLNFISTIGAVLMAIGFLFLVASIVYSHIKAPREATGDNWDGLGRTLEWSTASAIPPKYNFAITPDWNDYDTFVDMKEHGRHYLDNHNYKDIHMPNNTPVGFWMGIFMTIGGFFLIFESIVPALICLAGIFITMIWRSFQIDHGYHIPASEVAETEARLREARIKEREAVSHES</sequence>
<name>QOX1_STAEQ</name>
<keyword id="KW-1003">Cell membrane</keyword>
<keyword id="KW-0186">Copper</keyword>
<keyword id="KW-0249">Electron transport</keyword>
<keyword id="KW-0349">Heme</keyword>
<keyword id="KW-0375">Hydrogen ion transport</keyword>
<keyword id="KW-0406">Ion transport</keyword>
<keyword id="KW-0408">Iron</keyword>
<keyword id="KW-0472">Membrane</keyword>
<keyword id="KW-0479">Metal-binding</keyword>
<keyword id="KW-0560">Oxidoreductase</keyword>
<keyword id="KW-1185">Reference proteome</keyword>
<keyword id="KW-0679">Respiratory chain</keyword>
<keyword id="KW-0812">Transmembrane</keyword>
<keyword id="KW-1133">Transmembrane helix</keyword>
<keyword id="KW-0813">Transport</keyword>
<organism>
    <name type="scientific">Staphylococcus epidermidis (strain ATCC 35984 / DSM 28319 / BCRC 17069 / CCUG 31568 / BM 3577 / RP62A)</name>
    <dbReference type="NCBI Taxonomy" id="176279"/>
    <lineage>
        <taxon>Bacteria</taxon>
        <taxon>Bacillati</taxon>
        <taxon>Bacillota</taxon>
        <taxon>Bacilli</taxon>
        <taxon>Bacillales</taxon>
        <taxon>Staphylococcaceae</taxon>
        <taxon>Staphylococcus</taxon>
    </lineage>
</organism>
<accession>Q5HQB0</accession>
<feature type="chain" id="PRO_0000276751" description="Probable quinol oxidase subunit 1">
    <location>
        <begin position="1"/>
        <end position="662"/>
    </location>
</feature>
<feature type="transmembrane region" description="Helical" evidence="2">
    <location>
        <begin position="14"/>
        <end position="34"/>
    </location>
</feature>
<feature type="transmembrane region" description="Helical" evidence="2">
    <location>
        <begin position="56"/>
        <end position="76"/>
    </location>
</feature>
<feature type="transmembrane region" description="Helical" evidence="2">
    <location>
        <begin position="103"/>
        <end position="123"/>
    </location>
</feature>
<feature type="transmembrane region" description="Helical" evidence="2">
    <location>
        <begin position="140"/>
        <end position="160"/>
    </location>
</feature>
<feature type="transmembrane region" description="Helical" evidence="2">
    <location>
        <begin position="187"/>
        <end position="207"/>
    </location>
</feature>
<feature type="transmembrane region" description="Helical" evidence="2">
    <location>
        <begin position="228"/>
        <end position="248"/>
    </location>
</feature>
<feature type="transmembrane region" description="Helical" evidence="2">
    <location>
        <begin position="273"/>
        <end position="293"/>
    </location>
</feature>
<feature type="transmembrane region" description="Helical" evidence="2">
    <location>
        <begin position="311"/>
        <end position="331"/>
    </location>
</feature>
<feature type="transmembrane region" description="Helical" evidence="2">
    <location>
        <begin position="336"/>
        <end position="356"/>
    </location>
</feature>
<feature type="transmembrane region" description="Helical" evidence="2">
    <location>
        <begin position="376"/>
        <end position="396"/>
    </location>
</feature>
<feature type="transmembrane region" description="Helical" evidence="2">
    <location>
        <begin position="415"/>
        <end position="435"/>
    </location>
</feature>
<feature type="transmembrane region" description="Helical" evidence="2">
    <location>
        <begin position="451"/>
        <end position="471"/>
    </location>
</feature>
<feature type="transmembrane region" description="Helical" evidence="2">
    <location>
        <begin position="492"/>
        <end position="512"/>
    </location>
</feature>
<feature type="transmembrane region" description="Helical" evidence="2">
    <location>
        <begin position="587"/>
        <end position="604"/>
    </location>
</feature>
<feature type="transmembrane region" description="Helical" evidence="2">
    <location>
        <begin position="608"/>
        <end position="627"/>
    </location>
</feature>
<feature type="binding site" description="axial binding residue" evidence="1">
    <location>
        <position position="102"/>
    </location>
    <ligand>
        <name>Fe(II)-heme a</name>
        <dbReference type="ChEBI" id="CHEBI:61715"/>
    </ligand>
    <ligandPart>
        <name>Fe</name>
        <dbReference type="ChEBI" id="CHEBI:18248"/>
    </ligandPart>
</feature>
<feature type="binding site" evidence="1">
    <location>
        <position position="279"/>
    </location>
    <ligand>
        <name>Cu cation</name>
        <dbReference type="ChEBI" id="CHEBI:23378"/>
        <label>B</label>
    </ligand>
</feature>
<feature type="binding site" evidence="1">
    <location>
        <position position="283"/>
    </location>
    <ligand>
        <name>Cu cation</name>
        <dbReference type="ChEBI" id="CHEBI:23378"/>
        <label>B</label>
    </ligand>
</feature>
<feature type="binding site" evidence="1">
    <location>
        <position position="328"/>
    </location>
    <ligand>
        <name>Cu cation</name>
        <dbReference type="ChEBI" id="CHEBI:23378"/>
        <label>B</label>
    </ligand>
</feature>
<feature type="binding site" evidence="1">
    <location>
        <position position="329"/>
    </location>
    <ligand>
        <name>Cu cation</name>
        <dbReference type="ChEBI" id="CHEBI:23378"/>
        <label>B</label>
    </ligand>
</feature>
<feature type="binding site" description="axial binding residue" evidence="1">
    <location>
        <position position="414"/>
    </location>
    <ligand>
        <name>heme a3</name>
        <dbReference type="ChEBI" id="CHEBI:83282"/>
    </ligand>
    <ligandPart>
        <name>Fe</name>
        <dbReference type="ChEBI" id="CHEBI:18248"/>
    </ligandPart>
</feature>
<feature type="binding site" description="axial binding residue" evidence="1">
    <location>
        <position position="416"/>
    </location>
    <ligand>
        <name>Fe(II)-heme a</name>
        <dbReference type="ChEBI" id="CHEBI:61715"/>
    </ligand>
    <ligandPart>
        <name>Fe</name>
        <dbReference type="ChEBI" id="CHEBI:18248"/>
    </ligandPart>
</feature>
<feature type="cross-link" description="1'-histidyl-3'-tyrosine (His-Tyr)" evidence="1">
    <location>
        <begin position="279"/>
        <end position="283"/>
    </location>
</feature>
<reference key="1">
    <citation type="journal article" date="2005" name="J. Bacteriol.">
        <title>Insights on evolution of virulence and resistance from the complete genome analysis of an early methicillin-resistant Staphylococcus aureus strain and a biofilm-producing methicillin-resistant Staphylococcus epidermidis strain.</title>
        <authorList>
            <person name="Gill S.R."/>
            <person name="Fouts D.E."/>
            <person name="Archer G.L."/>
            <person name="Mongodin E.F."/>
            <person name="DeBoy R.T."/>
            <person name="Ravel J."/>
            <person name="Paulsen I.T."/>
            <person name="Kolonay J.F."/>
            <person name="Brinkac L.M."/>
            <person name="Beanan M.J."/>
            <person name="Dodson R.J."/>
            <person name="Daugherty S.C."/>
            <person name="Madupu R."/>
            <person name="Angiuoli S.V."/>
            <person name="Durkin A.S."/>
            <person name="Haft D.H."/>
            <person name="Vamathevan J.J."/>
            <person name="Khouri H."/>
            <person name="Utterback T.R."/>
            <person name="Lee C."/>
            <person name="Dimitrov G."/>
            <person name="Jiang L."/>
            <person name="Qin H."/>
            <person name="Weidman J."/>
            <person name="Tran K."/>
            <person name="Kang K.H."/>
            <person name="Hance I.R."/>
            <person name="Nelson K.E."/>
            <person name="Fraser C.M."/>
        </authorList>
    </citation>
    <scope>NUCLEOTIDE SEQUENCE [LARGE SCALE GENOMIC DNA]</scope>
    <source>
        <strain>ATCC 35984 / DSM 28319 / BCRC 17069 / CCUG 31568 / BM 3577 / RP62A</strain>
    </source>
</reference>
<gene>
    <name type="primary">qoxB</name>
    <name type="ordered locus">SERP0645</name>
</gene>
<evidence type="ECO:0000250" key="1"/>
<evidence type="ECO:0000255" key="2"/>
<evidence type="ECO:0000305" key="3"/>